<proteinExistence type="inferred from homology"/>
<evidence type="ECO:0000250" key="1"/>
<evidence type="ECO:0000255" key="2"/>
<evidence type="ECO:0000255" key="3">
    <source>
        <dbReference type="PROSITE-ProRule" id="PRU00521"/>
    </source>
</evidence>
<evidence type="ECO:0000256" key="4">
    <source>
        <dbReference type="SAM" id="MobiDB-lite"/>
    </source>
</evidence>
<evidence type="ECO:0000269" key="5">
    <source>
    </source>
</evidence>
<evidence type="ECO:0000305" key="6"/>
<accession>F5HDK1</accession>
<organismHost>
    <name type="scientific">Homo sapiens</name>
    <name type="common">Human</name>
    <dbReference type="NCBI Taxonomy" id="9606"/>
</organismHost>
<feature type="chain" id="PRO_0000416442" description="Envelope glycoprotein US27">
    <location>
        <begin position="1"/>
        <end position="364"/>
    </location>
</feature>
<feature type="topological domain" description="Virion surface" evidence="2">
    <location>
        <begin position="1"/>
        <end position="36"/>
    </location>
</feature>
<feature type="transmembrane region" description="Helical" evidence="2">
    <location>
        <begin position="37"/>
        <end position="57"/>
    </location>
</feature>
<feature type="topological domain" description="Intravirion" evidence="2">
    <location>
        <begin position="58"/>
        <end position="69"/>
    </location>
</feature>
<feature type="transmembrane region" description="Helical" evidence="2">
    <location>
        <begin position="70"/>
        <end position="90"/>
    </location>
</feature>
<feature type="topological domain" description="Virion surface" evidence="2">
    <location>
        <begin position="91"/>
        <end position="103"/>
    </location>
</feature>
<feature type="transmembrane region" description="Helical" evidence="2">
    <location>
        <begin position="104"/>
        <end position="124"/>
    </location>
</feature>
<feature type="topological domain" description="Intravirion" evidence="2">
    <location>
        <begin position="125"/>
        <end position="150"/>
    </location>
</feature>
<feature type="transmembrane region" description="Helical" evidence="2">
    <location>
        <begin position="151"/>
        <end position="171"/>
    </location>
</feature>
<feature type="topological domain" description="Virion surface" evidence="2">
    <location>
        <begin position="172"/>
        <end position="188"/>
    </location>
</feature>
<feature type="transmembrane region" description="Helical" evidence="2">
    <location>
        <begin position="189"/>
        <end position="209"/>
    </location>
</feature>
<feature type="topological domain" description="Intravirion" evidence="2">
    <location>
        <begin position="210"/>
        <end position="234"/>
    </location>
</feature>
<feature type="transmembrane region" description="Helical" evidence="2">
    <location>
        <begin position="235"/>
        <end position="255"/>
    </location>
</feature>
<feature type="topological domain" description="Virion surface" evidence="2">
    <location>
        <begin position="256"/>
        <end position="279"/>
    </location>
</feature>
<feature type="transmembrane region" description="Helical" evidence="2">
    <location>
        <begin position="280"/>
        <end position="300"/>
    </location>
</feature>
<feature type="topological domain" description="Intravirion" evidence="2">
    <location>
        <begin position="301"/>
        <end position="364"/>
    </location>
</feature>
<feature type="region of interest" description="Disordered" evidence="4">
    <location>
        <begin position="344"/>
        <end position="364"/>
    </location>
</feature>
<feature type="glycosylation site" description="N-linked (GlcNAc...) asparagine; by host" evidence="2">
    <location>
        <position position="17"/>
    </location>
</feature>
<feature type="glycosylation site" description="N-linked (GlcNAc...) asparagine; by host" evidence="2">
    <location>
        <position position="20"/>
    </location>
</feature>
<feature type="glycosylation site" description="N-linked (GlcNAc...) asparagine; by host" evidence="2">
    <location>
        <position position="24"/>
    </location>
</feature>
<organism>
    <name type="scientific">Human cytomegalovirus (strain Merlin)</name>
    <name type="common">HHV-5</name>
    <name type="synonym">Human herpesvirus 5</name>
    <dbReference type="NCBI Taxonomy" id="295027"/>
    <lineage>
        <taxon>Viruses</taxon>
        <taxon>Duplodnaviria</taxon>
        <taxon>Heunggongvirae</taxon>
        <taxon>Peploviricota</taxon>
        <taxon>Herviviricetes</taxon>
        <taxon>Herpesvirales</taxon>
        <taxon>Orthoherpesviridae</taxon>
        <taxon>Betaherpesvirinae</taxon>
        <taxon>Cytomegalovirus</taxon>
        <taxon>Cytomegalovirus humanbeta5</taxon>
        <taxon>Human cytomegalovirus</taxon>
    </lineage>
</organism>
<reference key="1">
    <citation type="journal article" date="2003" name="J. Gen. Virol.">
        <title>Homology between the human cytomegalovirus RL11 gene family and human adenovirus E3 genes.</title>
        <authorList>
            <person name="Davison A.J."/>
            <person name="Akter P."/>
            <person name="Cunningham C."/>
            <person name="Dolan A."/>
            <person name="Addison C."/>
            <person name="Dargan D.J."/>
            <person name="Hassan-Walker A.F."/>
            <person name="Emery V.C."/>
            <person name="Griffiths P.D."/>
            <person name="Wilkinson G.W."/>
        </authorList>
    </citation>
    <scope>NUCLEOTIDE SEQUENCE [LARGE SCALE GENOMIC DNA]</scope>
    <source>
        <strain>Merlin</strain>
    </source>
</reference>
<reference key="2">
    <citation type="journal article" date="2003" name="J. Gen. Virol.">
        <title>Two novel spliced genes in human cytomegalovirus.</title>
        <authorList>
            <person name="Akter P."/>
            <person name="Cunningham C."/>
            <person name="McSharry B.P."/>
            <person name="Dolan A."/>
            <person name="Addison C."/>
            <person name="Dargan D.J."/>
            <person name="Hassan-Walker A.F."/>
            <person name="Emery V.C."/>
            <person name="Griffiths P.D."/>
            <person name="Wilkinson G.W."/>
            <person name="Davison A.J."/>
        </authorList>
    </citation>
    <scope>NUCLEOTIDE SEQUENCE [LARGE SCALE GENOMIC DNA]</scope>
    <source>
        <strain>Merlin</strain>
    </source>
</reference>
<reference key="3">
    <citation type="journal article" date="2003" name="J. Gen. Virol.">
        <title>The most abundantly transcribed human cytomegalovirus gene (beta 2.7) is non-essential for growth in vitro.</title>
        <authorList>
            <person name="McSharry B.P."/>
            <person name="Tomasec P."/>
            <person name="Neale M.L."/>
            <person name="Wilkinson G.W."/>
        </authorList>
    </citation>
    <scope>NUCLEOTIDE SEQUENCE [LARGE SCALE GENOMIC DNA]</scope>
    <source>
        <strain>Merlin</strain>
    </source>
</reference>
<reference key="4">
    <citation type="journal article" date="2004" name="J. Gen. Virol.">
        <title>Genetic content of wild-type human cytomegalovirus.</title>
        <authorList>
            <person name="Dolan A."/>
            <person name="Cunningham C."/>
            <person name="Hector R.D."/>
            <person name="Hassan-Walker A.F."/>
            <person name="Lee L."/>
            <person name="Addison C."/>
            <person name="Dargan D.J."/>
            <person name="McGeoch D.J."/>
            <person name="Gatherer D."/>
            <person name="Emery V.C."/>
            <person name="Griffiths P.D."/>
            <person name="Sinzger C."/>
            <person name="McSharry B.P."/>
            <person name="Wilkinson G.W.G."/>
            <person name="Davison A.J."/>
        </authorList>
    </citation>
    <scope>NUCLEOTIDE SEQUENCE [LARGE SCALE GENOMIC DNA]</scope>
    <source>
        <strain>Merlin</strain>
    </source>
</reference>
<reference key="5">
    <citation type="journal article" date="2011" name="J. Virol.">
        <title>Human cytomegalovirus pUS27 G protein-coupled receptor homologue is required for efficient spread by the extracellular route but not for direct cell-to-cell spread.</title>
        <authorList>
            <person name="O'Connor C.M."/>
            <person name="Shenk T."/>
        </authorList>
    </citation>
    <scope>FUNCTION</scope>
    <source>
        <strain>clinical isolate BFXwtGFP</strain>
    </source>
</reference>
<protein>
    <recommendedName>
        <fullName>Envelope glycoprotein US27</fullName>
    </recommendedName>
</protein>
<sequence>MTTSTTTTTNIMLQVSNVTNHTLNSTEIYQLFEYTRFGVWLMCIVGTFLNMLVITTILYYRRKKKSPSDTYICNLAVADLLIVVGLPFFLEYAKHHPKLSREVVCSGLNACFYICLFAGVCFLINLSMDRYCVIVWGVELNRVRNNKRATCWVVIFWILAALMGMPHYLMYSHTNNECVGEFANETSGWFPVFLNTKVNICGYLAPIVLMAYTYNRMVRFIINYVGKWHMQTLHVLLVVVVSFASFWFPFNLALFLESIRLLSGTQNETLQTVITFCLYVGQFLAYVRACLNPGIYILVGTQMRKDMWTTLRVFACCCVKQEIPYQDIDIELQKDIQRRAKHTKRTHYDRKHAPMESGEEEFLL</sequence>
<keyword id="KW-0297">G-protein coupled receptor</keyword>
<keyword id="KW-0325">Glycoprotein</keyword>
<keyword id="KW-1032">Host cell membrane</keyword>
<keyword id="KW-1043">Host membrane</keyword>
<keyword id="KW-0472">Membrane</keyword>
<keyword id="KW-0675">Receptor</keyword>
<keyword id="KW-1185">Reference proteome</keyword>
<keyword id="KW-0807">Transducer</keyword>
<keyword id="KW-0812">Transmembrane</keyword>
<keyword id="KW-1133">Transmembrane helix</keyword>
<keyword id="KW-0261">Viral envelope protein</keyword>
<keyword id="KW-0946">Virion</keyword>
<gene>
    <name type="primary">US27</name>
</gene>
<dbReference type="EMBL" id="AY446894">
    <property type="protein sequence ID" value="AAR31715.1"/>
    <property type="molecule type" value="Genomic_DNA"/>
</dbReference>
<dbReference type="RefSeq" id="YP_081611.1">
    <property type="nucleotide sequence ID" value="NC_006273.2"/>
</dbReference>
<dbReference type="SMR" id="F5HDK1"/>
<dbReference type="GlyCosmos" id="F5HDK1">
    <property type="glycosylation" value="3 sites, No reported glycans"/>
</dbReference>
<dbReference type="DNASU" id="3077557"/>
<dbReference type="GeneID" id="3077557"/>
<dbReference type="KEGG" id="vg:3077557"/>
<dbReference type="Reactome" id="R-HSA-9609690">
    <property type="pathway name" value="HCMV Early Events"/>
</dbReference>
<dbReference type="Proteomes" id="UP000000938">
    <property type="component" value="Segment"/>
</dbReference>
<dbReference type="GO" id="GO:0020002">
    <property type="term" value="C:host cell plasma membrane"/>
    <property type="evidence" value="ECO:0007669"/>
    <property type="project" value="UniProtKB-SubCell"/>
</dbReference>
<dbReference type="GO" id="GO:0016020">
    <property type="term" value="C:membrane"/>
    <property type="evidence" value="ECO:0007669"/>
    <property type="project" value="UniProtKB-KW"/>
</dbReference>
<dbReference type="GO" id="GO:0019031">
    <property type="term" value="C:viral envelope"/>
    <property type="evidence" value="ECO:0007669"/>
    <property type="project" value="UniProtKB-KW"/>
</dbReference>
<dbReference type="GO" id="GO:0019957">
    <property type="term" value="F:C-C chemokine binding"/>
    <property type="evidence" value="ECO:0007669"/>
    <property type="project" value="TreeGrafter"/>
</dbReference>
<dbReference type="GO" id="GO:0016493">
    <property type="term" value="F:C-C chemokine receptor activity"/>
    <property type="evidence" value="ECO:0007669"/>
    <property type="project" value="TreeGrafter"/>
</dbReference>
<dbReference type="GO" id="GO:0019722">
    <property type="term" value="P:calcium-mediated signaling"/>
    <property type="evidence" value="ECO:0007669"/>
    <property type="project" value="TreeGrafter"/>
</dbReference>
<dbReference type="GO" id="GO:0060326">
    <property type="term" value="P:cell chemotaxis"/>
    <property type="evidence" value="ECO:0007669"/>
    <property type="project" value="TreeGrafter"/>
</dbReference>
<dbReference type="GO" id="GO:0006955">
    <property type="term" value="P:immune response"/>
    <property type="evidence" value="ECO:0007669"/>
    <property type="project" value="TreeGrafter"/>
</dbReference>
<dbReference type="GO" id="GO:0007204">
    <property type="term" value="P:positive regulation of cytosolic calcium ion concentration"/>
    <property type="evidence" value="ECO:0007669"/>
    <property type="project" value="TreeGrafter"/>
</dbReference>
<dbReference type="Gene3D" id="1.20.1070.10">
    <property type="entry name" value="Rhodopsin 7-helix transmembrane proteins"/>
    <property type="match status" value="1"/>
</dbReference>
<dbReference type="InterPro" id="IPR050119">
    <property type="entry name" value="CCR1-9-like"/>
</dbReference>
<dbReference type="InterPro" id="IPR000276">
    <property type="entry name" value="GPCR_Rhodpsn"/>
</dbReference>
<dbReference type="InterPro" id="IPR017452">
    <property type="entry name" value="GPCR_Rhodpsn_7TM"/>
</dbReference>
<dbReference type="PANTHER" id="PTHR10489">
    <property type="entry name" value="CELL ADHESION MOLECULE"/>
    <property type="match status" value="1"/>
</dbReference>
<dbReference type="PANTHER" id="PTHR10489:SF932">
    <property type="entry name" value="G-PROTEIN COUPLED RECEPTORS FAMILY 1 PROFILE DOMAIN-CONTAINING PROTEIN"/>
    <property type="match status" value="1"/>
</dbReference>
<dbReference type="Pfam" id="PF00001">
    <property type="entry name" value="7tm_1"/>
    <property type="match status" value="1"/>
</dbReference>
<dbReference type="PRINTS" id="PR00237">
    <property type="entry name" value="GPCRRHODOPSN"/>
</dbReference>
<dbReference type="SUPFAM" id="SSF81321">
    <property type="entry name" value="Family A G protein-coupled receptor-like"/>
    <property type="match status" value="1"/>
</dbReference>
<dbReference type="PROSITE" id="PS00237">
    <property type="entry name" value="G_PROTEIN_RECEP_F1_1"/>
    <property type="match status" value="1"/>
</dbReference>
<dbReference type="PROSITE" id="PS50262">
    <property type="entry name" value="G_PROTEIN_RECEP_F1_2"/>
    <property type="match status" value="1"/>
</dbReference>
<name>US27_HCMVM</name>
<comment type="function">
    <text evidence="1 5">Plays an important role in spread of HCMV via the extracellular route. As a G-protein-coupled receptor (vGPCR), may activate signaling pathways important for virion assembly or egress processes (By similarity).</text>
</comment>
<comment type="subunit">
    <text evidence="1">Heterodimerizes with US28.</text>
</comment>
<comment type="subcellular location">
    <subcellularLocation>
        <location evidence="1">Virion</location>
    </subcellularLocation>
    <subcellularLocation>
        <location evidence="6">Host cell membrane</location>
        <topology evidence="6">Multi-pass membrane protein</topology>
    </subcellularLocation>
</comment>
<comment type="similarity">
    <text evidence="3">Belongs to the G-protein coupled receptor 1 family.</text>
</comment>